<organism>
    <name type="scientific">Emericella nidulans (strain FGSC A4 / ATCC 38163 / CBS 112.46 / NRRL 194 / M139)</name>
    <name type="common">Aspergillus nidulans</name>
    <dbReference type="NCBI Taxonomy" id="227321"/>
    <lineage>
        <taxon>Eukaryota</taxon>
        <taxon>Fungi</taxon>
        <taxon>Dikarya</taxon>
        <taxon>Ascomycota</taxon>
        <taxon>Pezizomycotina</taxon>
        <taxon>Eurotiomycetes</taxon>
        <taxon>Eurotiomycetidae</taxon>
        <taxon>Eurotiales</taxon>
        <taxon>Aspergillaceae</taxon>
        <taxon>Aspergillus</taxon>
        <taxon>Aspergillus subgen. Nidulantes</taxon>
    </lineage>
</organism>
<accession>Q5B8Y3</accession>
<accession>C8VIX7</accession>
<comment type="function">
    <text evidence="1">Component of the eukaryotic translation initiation factor 3 (eIF-3) complex, which is involved in protein synthesis of a specialized repertoire of mRNAs and, together with other initiation factors, stimulates binding of mRNA and methionyl-tRNAi to the 40S ribosome. The eIF-3 complex specifically targets and initiates translation of a subset of mRNAs involved in cell proliferation.</text>
</comment>
<comment type="subunit">
    <text evidence="1">Component of the eukaryotic translation initiation factor 3 (eIF-3) complex.</text>
</comment>
<comment type="subcellular location">
    <subcellularLocation>
        <location evidence="1">Cytoplasm</location>
    </subcellularLocation>
</comment>
<comment type="similarity">
    <text evidence="1">Belongs to the eIF-3 subunit I family.</text>
</comment>
<sequence length="336" mass="37371">MRPILLAGHERSLNQIKFNRDGDLLFSVAKDKIVCAWWSANGERLGTYSGHLGAIWTVDVSPNTVLLATGSADNSVRLWNVKTGECVKVWEFPTAVKRVEFSPDGSKVLAVTEKRMGFLGTIAVLDINYDGDFTNQAEEPSLRITCTESKATVAGWSYLGKYIIAGHEDGSVSQYDAKTGEQLENVQAHEFDHQINDLQFSPDRTHFLTASKDKSAKLMSSRNLAILKTYVADTPLNSAAITPKKEYVILGGGQAAMDVTTTSARQGKFEARFYHKVFEDEIGRVKGHFGPLNTIHVHPAGTAYASGGEDGYVRVHHFDKPYFDFMYEVEREQLRR</sequence>
<reference key="1">
    <citation type="journal article" date="2005" name="Nature">
        <title>Sequencing of Aspergillus nidulans and comparative analysis with A. fumigatus and A. oryzae.</title>
        <authorList>
            <person name="Galagan J.E."/>
            <person name="Calvo S.E."/>
            <person name="Cuomo C."/>
            <person name="Ma L.-J."/>
            <person name="Wortman J.R."/>
            <person name="Batzoglou S."/>
            <person name="Lee S.-I."/>
            <person name="Bastuerkmen M."/>
            <person name="Spevak C.C."/>
            <person name="Clutterbuck J."/>
            <person name="Kapitonov V."/>
            <person name="Jurka J."/>
            <person name="Scazzocchio C."/>
            <person name="Farman M.L."/>
            <person name="Butler J."/>
            <person name="Purcell S."/>
            <person name="Harris S."/>
            <person name="Braus G.H."/>
            <person name="Draht O."/>
            <person name="Busch S."/>
            <person name="D'Enfert C."/>
            <person name="Bouchier C."/>
            <person name="Goldman G.H."/>
            <person name="Bell-Pedersen D."/>
            <person name="Griffiths-Jones S."/>
            <person name="Doonan J.H."/>
            <person name="Yu J."/>
            <person name="Vienken K."/>
            <person name="Pain A."/>
            <person name="Freitag M."/>
            <person name="Selker E.U."/>
            <person name="Archer D.B."/>
            <person name="Penalva M.A."/>
            <person name="Oakley B.R."/>
            <person name="Momany M."/>
            <person name="Tanaka T."/>
            <person name="Kumagai T."/>
            <person name="Asai K."/>
            <person name="Machida M."/>
            <person name="Nierman W.C."/>
            <person name="Denning D.W."/>
            <person name="Caddick M.X."/>
            <person name="Hynes M."/>
            <person name="Paoletti M."/>
            <person name="Fischer R."/>
            <person name="Miller B.L."/>
            <person name="Dyer P.S."/>
            <person name="Sachs M.S."/>
            <person name="Osmani S.A."/>
            <person name="Birren B.W."/>
        </authorList>
    </citation>
    <scope>NUCLEOTIDE SEQUENCE [LARGE SCALE GENOMIC DNA]</scope>
    <source>
        <strain>FGSC A4 / ATCC 38163 / CBS 112.46 / NRRL 194 / M139</strain>
    </source>
</reference>
<reference key="2">
    <citation type="journal article" date="2009" name="Fungal Genet. Biol.">
        <title>The 2008 update of the Aspergillus nidulans genome annotation: a community effort.</title>
        <authorList>
            <person name="Wortman J.R."/>
            <person name="Gilsenan J.M."/>
            <person name="Joardar V."/>
            <person name="Deegan J."/>
            <person name="Clutterbuck J."/>
            <person name="Andersen M.R."/>
            <person name="Archer D."/>
            <person name="Bencina M."/>
            <person name="Braus G."/>
            <person name="Coutinho P."/>
            <person name="von Dohren H."/>
            <person name="Doonan J."/>
            <person name="Driessen A.J."/>
            <person name="Durek P."/>
            <person name="Espeso E."/>
            <person name="Fekete E."/>
            <person name="Flipphi M."/>
            <person name="Estrada C.G."/>
            <person name="Geysens S."/>
            <person name="Goldman G."/>
            <person name="de Groot P.W."/>
            <person name="Hansen K."/>
            <person name="Harris S.D."/>
            <person name="Heinekamp T."/>
            <person name="Helmstaedt K."/>
            <person name="Henrissat B."/>
            <person name="Hofmann G."/>
            <person name="Homan T."/>
            <person name="Horio T."/>
            <person name="Horiuchi H."/>
            <person name="James S."/>
            <person name="Jones M."/>
            <person name="Karaffa L."/>
            <person name="Karanyi Z."/>
            <person name="Kato M."/>
            <person name="Keller N."/>
            <person name="Kelly D.E."/>
            <person name="Kiel J.A."/>
            <person name="Kim J.M."/>
            <person name="van der Klei I.J."/>
            <person name="Klis F.M."/>
            <person name="Kovalchuk A."/>
            <person name="Krasevec N."/>
            <person name="Kubicek C.P."/>
            <person name="Liu B."/>
            <person name="Maccabe A."/>
            <person name="Meyer V."/>
            <person name="Mirabito P."/>
            <person name="Miskei M."/>
            <person name="Mos M."/>
            <person name="Mullins J."/>
            <person name="Nelson D.R."/>
            <person name="Nielsen J."/>
            <person name="Oakley B.R."/>
            <person name="Osmani S.A."/>
            <person name="Pakula T."/>
            <person name="Paszewski A."/>
            <person name="Paulsen I."/>
            <person name="Pilsyk S."/>
            <person name="Pocsi I."/>
            <person name="Punt P.J."/>
            <person name="Ram A.F."/>
            <person name="Ren Q."/>
            <person name="Robellet X."/>
            <person name="Robson G."/>
            <person name="Seiboth B."/>
            <person name="van Solingen P."/>
            <person name="Specht T."/>
            <person name="Sun J."/>
            <person name="Taheri-Talesh N."/>
            <person name="Takeshita N."/>
            <person name="Ussery D."/>
            <person name="vanKuyk P.A."/>
            <person name="Visser H."/>
            <person name="van de Vondervoort P.J."/>
            <person name="de Vries R.P."/>
            <person name="Walton J."/>
            <person name="Xiang X."/>
            <person name="Xiong Y."/>
            <person name="Zeng A.P."/>
            <person name="Brandt B.W."/>
            <person name="Cornell M.J."/>
            <person name="van den Hondel C.A."/>
            <person name="Visser J."/>
            <person name="Oliver S.G."/>
            <person name="Turner G."/>
        </authorList>
    </citation>
    <scope>GENOME REANNOTATION</scope>
    <source>
        <strain>FGSC A4 / ATCC 38163 / CBS 112.46 / NRRL 194 / M139</strain>
    </source>
</reference>
<name>EIF3I_EMENI</name>
<proteinExistence type="inferred from homology"/>
<gene>
    <name type="primary">tif34</name>
    <name type="ORF">AN2997</name>
</gene>
<dbReference type="EMBL" id="AACD01000051">
    <property type="protein sequence ID" value="EAA63568.1"/>
    <property type="molecule type" value="Genomic_DNA"/>
</dbReference>
<dbReference type="EMBL" id="BN001306">
    <property type="protein sequence ID" value="CBF83597.1"/>
    <property type="molecule type" value="Genomic_DNA"/>
</dbReference>
<dbReference type="RefSeq" id="XP_660601.1">
    <property type="nucleotide sequence ID" value="XM_655509.1"/>
</dbReference>
<dbReference type="SMR" id="Q5B8Y3"/>
<dbReference type="FunCoup" id="Q5B8Y3">
    <property type="interactions" value="1074"/>
</dbReference>
<dbReference type="STRING" id="227321.Q5B8Y3"/>
<dbReference type="EnsemblFungi" id="CBF83597">
    <property type="protein sequence ID" value="CBF83597"/>
    <property type="gene ID" value="ANIA_02997"/>
</dbReference>
<dbReference type="KEGG" id="ani:ANIA_02997"/>
<dbReference type="VEuPathDB" id="FungiDB:AN2997"/>
<dbReference type="eggNOG" id="KOG0643">
    <property type="taxonomic scope" value="Eukaryota"/>
</dbReference>
<dbReference type="HOGENOM" id="CLU_043845_0_1_1"/>
<dbReference type="InParanoid" id="Q5B8Y3"/>
<dbReference type="OMA" id="VWFSHNG"/>
<dbReference type="OrthoDB" id="24966at2759"/>
<dbReference type="Proteomes" id="UP000000560">
    <property type="component" value="Chromosome VI"/>
</dbReference>
<dbReference type="GO" id="GO:0016282">
    <property type="term" value="C:eukaryotic 43S preinitiation complex"/>
    <property type="evidence" value="ECO:0007669"/>
    <property type="project" value="UniProtKB-UniRule"/>
</dbReference>
<dbReference type="GO" id="GO:0033290">
    <property type="term" value="C:eukaryotic 48S preinitiation complex"/>
    <property type="evidence" value="ECO:0007669"/>
    <property type="project" value="UniProtKB-UniRule"/>
</dbReference>
<dbReference type="GO" id="GO:0071540">
    <property type="term" value="C:eukaryotic translation initiation factor 3 complex, eIF3e"/>
    <property type="evidence" value="ECO:0007669"/>
    <property type="project" value="EnsemblFungi"/>
</dbReference>
<dbReference type="GO" id="GO:0071541">
    <property type="term" value="C:eukaryotic translation initiation factor 3 complex, eIF3m"/>
    <property type="evidence" value="ECO:0000318"/>
    <property type="project" value="GO_Central"/>
</dbReference>
<dbReference type="GO" id="GO:0034399">
    <property type="term" value="C:nuclear periphery"/>
    <property type="evidence" value="ECO:0007669"/>
    <property type="project" value="EnsemblFungi"/>
</dbReference>
<dbReference type="GO" id="GO:0003723">
    <property type="term" value="F:RNA binding"/>
    <property type="evidence" value="ECO:0000318"/>
    <property type="project" value="GO_Central"/>
</dbReference>
<dbReference type="GO" id="GO:0003743">
    <property type="term" value="F:translation initiation factor activity"/>
    <property type="evidence" value="ECO:0000318"/>
    <property type="project" value="GO_Central"/>
</dbReference>
<dbReference type="GO" id="GO:0002183">
    <property type="term" value="P:cytoplasmic translational initiation"/>
    <property type="evidence" value="ECO:0000318"/>
    <property type="project" value="GO_Central"/>
</dbReference>
<dbReference type="GO" id="GO:0001732">
    <property type="term" value="P:formation of cytoplasmic translation initiation complex"/>
    <property type="evidence" value="ECO:0007669"/>
    <property type="project" value="UniProtKB-UniRule"/>
</dbReference>
<dbReference type="FunFam" id="2.130.10.10:FF:000127">
    <property type="entry name" value="Eukaryotic translation initiation factor 3 subunit I"/>
    <property type="match status" value="1"/>
</dbReference>
<dbReference type="Gene3D" id="2.130.10.10">
    <property type="entry name" value="YVTN repeat-like/Quinoprotein amine dehydrogenase"/>
    <property type="match status" value="1"/>
</dbReference>
<dbReference type="HAMAP" id="MF_03008">
    <property type="entry name" value="eIF3i"/>
    <property type="match status" value="1"/>
</dbReference>
<dbReference type="InterPro" id="IPR027525">
    <property type="entry name" value="eIF3i"/>
</dbReference>
<dbReference type="InterPro" id="IPR015943">
    <property type="entry name" value="WD40/YVTN_repeat-like_dom_sf"/>
</dbReference>
<dbReference type="InterPro" id="IPR019775">
    <property type="entry name" value="WD40_repeat_CS"/>
</dbReference>
<dbReference type="InterPro" id="IPR036322">
    <property type="entry name" value="WD40_repeat_dom_sf"/>
</dbReference>
<dbReference type="InterPro" id="IPR001680">
    <property type="entry name" value="WD40_rpt"/>
</dbReference>
<dbReference type="PANTHER" id="PTHR19877">
    <property type="entry name" value="EUKARYOTIC TRANSLATION INITIATION FACTOR 3 SUBUNIT I"/>
    <property type="match status" value="1"/>
</dbReference>
<dbReference type="PANTHER" id="PTHR19877:SF1">
    <property type="entry name" value="EUKARYOTIC TRANSLATION INITIATION FACTOR 3 SUBUNIT I"/>
    <property type="match status" value="1"/>
</dbReference>
<dbReference type="Pfam" id="PF24805">
    <property type="entry name" value="EIF3I"/>
    <property type="match status" value="1"/>
</dbReference>
<dbReference type="SMART" id="SM00320">
    <property type="entry name" value="WD40"/>
    <property type="match status" value="6"/>
</dbReference>
<dbReference type="SUPFAM" id="SSF50978">
    <property type="entry name" value="WD40 repeat-like"/>
    <property type="match status" value="1"/>
</dbReference>
<dbReference type="PROSITE" id="PS00678">
    <property type="entry name" value="WD_REPEATS_1"/>
    <property type="match status" value="1"/>
</dbReference>
<dbReference type="PROSITE" id="PS50082">
    <property type="entry name" value="WD_REPEATS_2"/>
    <property type="match status" value="2"/>
</dbReference>
<dbReference type="PROSITE" id="PS50294">
    <property type="entry name" value="WD_REPEATS_REGION"/>
    <property type="match status" value="2"/>
</dbReference>
<evidence type="ECO:0000255" key="1">
    <source>
        <dbReference type="HAMAP-Rule" id="MF_03008"/>
    </source>
</evidence>
<protein>
    <recommendedName>
        <fullName evidence="1">Eukaryotic translation initiation factor 3 subunit I</fullName>
        <shortName evidence="1">eIF3i</shortName>
    </recommendedName>
    <alternativeName>
        <fullName evidence="1">Eukaryotic translation initiation factor 3 39 kDa subunit homolog</fullName>
        <shortName evidence="1">eIF-3 39 kDa subunit homolog</shortName>
    </alternativeName>
</protein>
<feature type="chain" id="PRO_0000365367" description="Eukaryotic translation initiation factor 3 subunit I">
    <location>
        <begin position="1"/>
        <end position="336"/>
    </location>
</feature>
<feature type="repeat" description="WD 1">
    <location>
        <begin position="8"/>
        <end position="47"/>
    </location>
</feature>
<feature type="repeat" description="WD 2">
    <location>
        <begin position="50"/>
        <end position="91"/>
    </location>
</feature>
<feature type="repeat" description="WD 3">
    <location>
        <begin position="146"/>
        <end position="185"/>
    </location>
</feature>
<feature type="repeat" description="WD 4">
    <location>
        <begin position="190"/>
        <end position="229"/>
    </location>
</feature>
<feature type="repeat" description="WD 5">
    <location>
        <begin position="287"/>
        <end position="326"/>
    </location>
</feature>
<keyword id="KW-0963">Cytoplasm</keyword>
<keyword id="KW-0396">Initiation factor</keyword>
<keyword id="KW-0648">Protein biosynthesis</keyword>
<keyword id="KW-1185">Reference proteome</keyword>
<keyword id="KW-0677">Repeat</keyword>
<keyword id="KW-0853">WD repeat</keyword>